<keyword id="KW-0131">Cell cycle</keyword>
<keyword id="KW-0132">Cell division</keyword>
<keyword id="KW-0342">GTP-binding</keyword>
<keyword id="KW-0460">Magnesium</keyword>
<keyword id="KW-0479">Metal-binding</keyword>
<keyword id="KW-0547">Nucleotide-binding</keyword>
<keyword id="KW-1185">Reference proteome</keyword>
<keyword id="KW-0717">Septation</keyword>
<protein>
    <recommendedName>
        <fullName evidence="1">Probable GTP-binding protein EngB</fullName>
    </recommendedName>
</protein>
<organism>
    <name type="scientific">Ruegeria sp. (strain TM1040)</name>
    <name type="common">Silicibacter sp.</name>
    <dbReference type="NCBI Taxonomy" id="292414"/>
    <lineage>
        <taxon>Bacteria</taxon>
        <taxon>Pseudomonadati</taxon>
        <taxon>Pseudomonadota</taxon>
        <taxon>Alphaproteobacteria</taxon>
        <taxon>Rhodobacterales</taxon>
        <taxon>Roseobacteraceae</taxon>
        <taxon>Ruegeria</taxon>
    </lineage>
</organism>
<reference key="1">
    <citation type="submission" date="2006-05" db="EMBL/GenBank/DDBJ databases">
        <title>Complete sequence of chromosome of Silicibacter sp. TM1040.</title>
        <authorList>
            <consortium name="US DOE Joint Genome Institute"/>
            <person name="Copeland A."/>
            <person name="Lucas S."/>
            <person name="Lapidus A."/>
            <person name="Barry K."/>
            <person name="Detter J.C."/>
            <person name="Glavina del Rio T."/>
            <person name="Hammon N."/>
            <person name="Israni S."/>
            <person name="Dalin E."/>
            <person name="Tice H."/>
            <person name="Pitluck S."/>
            <person name="Brettin T."/>
            <person name="Bruce D."/>
            <person name="Han C."/>
            <person name="Tapia R."/>
            <person name="Goodwin L."/>
            <person name="Thompson L.S."/>
            <person name="Gilna P."/>
            <person name="Schmutz J."/>
            <person name="Larimer F."/>
            <person name="Land M."/>
            <person name="Hauser L."/>
            <person name="Kyrpides N."/>
            <person name="Kim E."/>
            <person name="Belas R."/>
            <person name="Moran M.A."/>
            <person name="Buchan A."/>
            <person name="Gonzalez J.M."/>
            <person name="Schell M.A."/>
            <person name="Sun F."/>
            <person name="Richardson P."/>
        </authorList>
    </citation>
    <scope>NUCLEOTIDE SEQUENCE [LARGE SCALE GENOMIC DNA]</scope>
    <source>
        <strain>TM1040</strain>
    </source>
</reference>
<gene>
    <name evidence="1" type="primary">engB</name>
    <name type="ordered locus">TM1040_0305</name>
</gene>
<feature type="chain" id="PRO_0000266952" description="Probable GTP-binding protein EngB">
    <location>
        <begin position="1"/>
        <end position="216"/>
    </location>
</feature>
<feature type="domain" description="EngB-type G" evidence="1">
    <location>
        <begin position="43"/>
        <end position="216"/>
    </location>
</feature>
<feature type="binding site" evidence="1">
    <location>
        <begin position="51"/>
        <end position="58"/>
    </location>
    <ligand>
        <name>GTP</name>
        <dbReference type="ChEBI" id="CHEBI:37565"/>
    </ligand>
</feature>
<feature type="binding site" evidence="1">
    <location>
        <position position="58"/>
    </location>
    <ligand>
        <name>Mg(2+)</name>
        <dbReference type="ChEBI" id="CHEBI:18420"/>
    </ligand>
</feature>
<feature type="binding site" evidence="1">
    <location>
        <begin position="78"/>
        <end position="82"/>
    </location>
    <ligand>
        <name>GTP</name>
        <dbReference type="ChEBI" id="CHEBI:37565"/>
    </ligand>
</feature>
<feature type="binding site" evidence="1">
    <location>
        <position position="80"/>
    </location>
    <ligand>
        <name>Mg(2+)</name>
        <dbReference type="ChEBI" id="CHEBI:18420"/>
    </ligand>
</feature>
<feature type="binding site" evidence="1">
    <location>
        <begin position="96"/>
        <end position="99"/>
    </location>
    <ligand>
        <name>GTP</name>
        <dbReference type="ChEBI" id="CHEBI:37565"/>
    </ligand>
</feature>
<feature type="binding site" evidence="1">
    <location>
        <begin position="163"/>
        <end position="166"/>
    </location>
    <ligand>
        <name>GTP</name>
        <dbReference type="ChEBI" id="CHEBI:37565"/>
    </ligand>
</feature>
<feature type="binding site" evidence="1">
    <location>
        <begin position="197"/>
        <end position="199"/>
    </location>
    <ligand>
        <name>GTP</name>
        <dbReference type="ChEBI" id="CHEBI:37565"/>
    </ligand>
</feature>
<comment type="function">
    <text evidence="1">Necessary for normal cell division and for the maintenance of normal septation.</text>
</comment>
<comment type="cofactor">
    <cofactor evidence="1">
        <name>Mg(2+)</name>
        <dbReference type="ChEBI" id="CHEBI:18420"/>
    </cofactor>
</comment>
<comment type="similarity">
    <text evidence="1">Belongs to the TRAFAC class TrmE-Era-EngA-EngB-Septin-like GTPase superfamily. EngB GTPase family.</text>
</comment>
<dbReference type="EMBL" id="CP000377">
    <property type="protein sequence ID" value="ABF63038.1"/>
    <property type="molecule type" value="Genomic_DNA"/>
</dbReference>
<dbReference type="RefSeq" id="WP_011537654.1">
    <property type="nucleotide sequence ID" value="NC_008044.1"/>
</dbReference>
<dbReference type="SMR" id="Q1GJX8"/>
<dbReference type="STRING" id="292414.TM1040_0305"/>
<dbReference type="KEGG" id="sit:TM1040_0305"/>
<dbReference type="eggNOG" id="COG0218">
    <property type="taxonomic scope" value="Bacteria"/>
</dbReference>
<dbReference type="HOGENOM" id="CLU_033732_2_0_5"/>
<dbReference type="OrthoDB" id="9804921at2"/>
<dbReference type="Proteomes" id="UP000000636">
    <property type="component" value="Chromosome"/>
</dbReference>
<dbReference type="GO" id="GO:0005829">
    <property type="term" value="C:cytosol"/>
    <property type="evidence" value="ECO:0007669"/>
    <property type="project" value="TreeGrafter"/>
</dbReference>
<dbReference type="GO" id="GO:0005525">
    <property type="term" value="F:GTP binding"/>
    <property type="evidence" value="ECO:0007669"/>
    <property type="project" value="UniProtKB-UniRule"/>
</dbReference>
<dbReference type="GO" id="GO:0046872">
    <property type="term" value="F:metal ion binding"/>
    <property type="evidence" value="ECO:0007669"/>
    <property type="project" value="UniProtKB-KW"/>
</dbReference>
<dbReference type="GO" id="GO:0000917">
    <property type="term" value="P:division septum assembly"/>
    <property type="evidence" value="ECO:0007669"/>
    <property type="project" value="UniProtKB-KW"/>
</dbReference>
<dbReference type="CDD" id="cd01876">
    <property type="entry name" value="YihA_EngB"/>
    <property type="match status" value="1"/>
</dbReference>
<dbReference type="Gene3D" id="3.40.50.300">
    <property type="entry name" value="P-loop containing nucleotide triphosphate hydrolases"/>
    <property type="match status" value="1"/>
</dbReference>
<dbReference type="HAMAP" id="MF_00321">
    <property type="entry name" value="GTPase_EngB"/>
    <property type="match status" value="1"/>
</dbReference>
<dbReference type="InterPro" id="IPR030393">
    <property type="entry name" value="G_ENGB_dom"/>
</dbReference>
<dbReference type="InterPro" id="IPR006073">
    <property type="entry name" value="GTP-bd"/>
</dbReference>
<dbReference type="InterPro" id="IPR019987">
    <property type="entry name" value="GTP-bd_ribosome_bio_YsxC"/>
</dbReference>
<dbReference type="InterPro" id="IPR027417">
    <property type="entry name" value="P-loop_NTPase"/>
</dbReference>
<dbReference type="InterPro" id="IPR005225">
    <property type="entry name" value="Small_GTP-bd"/>
</dbReference>
<dbReference type="NCBIfam" id="TIGR03598">
    <property type="entry name" value="GTPase_YsxC"/>
    <property type="match status" value="1"/>
</dbReference>
<dbReference type="NCBIfam" id="TIGR00231">
    <property type="entry name" value="small_GTP"/>
    <property type="match status" value="1"/>
</dbReference>
<dbReference type="PANTHER" id="PTHR11649:SF13">
    <property type="entry name" value="ENGB-TYPE G DOMAIN-CONTAINING PROTEIN"/>
    <property type="match status" value="1"/>
</dbReference>
<dbReference type="PANTHER" id="PTHR11649">
    <property type="entry name" value="MSS1/TRME-RELATED GTP-BINDING PROTEIN"/>
    <property type="match status" value="1"/>
</dbReference>
<dbReference type="Pfam" id="PF01926">
    <property type="entry name" value="MMR_HSR1"/>
    <property type="match status" value="1"/>
</dbReference>
<dbReference type="SUPFAM" id="SSF52540">
    <property type="entry name" value="P-loop containing nucleoside triphosphate hydrolases"/>
    <property type="match status" value="1"/>
</dbReference>
<dbReference type="PROSITE" id="PS51706">
    <property type="entry name" value="G_ENGB"/>
    <property type="match status" value="1"/>
</dbReference>
<evidence type="ECO:0000255" key="1">
    <source>
        <dbReference type="HAMAP-Rule" id="MF_00321"/>
    </source>
</evidence>
<accession>Q1GJX8</accession>
<sequence>MQLPFPLAEEPDAAAMETGRKLFAGQSEFLKGVVAMSGLPPADRIEVCFAGRSNVGKSSLINALTGTKGLARASNTPGRTQEINFFTQGPELYLVDLPGYGYANAPLAVVEKWQRLLKQYLSGRQTLRRAFVLIDTRHGVKKVDEEIMKLLDTSAVTFQVVMTKADKVKEKDRAKILDQVRDALSKHPAAYPEIVLTSSEKGDGIATLRSIIAHLD</sequence>
<name>ENGB_RUEST</name>
<proteinExistence type="inferred from homology"/>